<name>UPE71_LITEW</name>
<dbReference type="GO" id="GO:0005576">
    <property type="term" value="C:extracellular region"/>
    <property type="evidence" value="ECO:0007669"/>
    <property type="project" value="UniProtKB-SubCell"/>
</dbReference>
<dbReference type="GO" id="GO:0042742">
    <property type="term" value="P:defense response to bacterium"/>
    <property type="evidence" value="ECO:0007669"/>
    <property type="project" value="UniProtKB-KW"/>
</dbReference>
<organism>
    <name type="scientific">Litoria ewingii</name>
    <name type="common">Southern brown tree frog</name>
    <name type="synonym">Hyla ewingii</name>
    <dbReference type="NCBI Taxonomy" id="104896"/>
    <lineage>
        <taxon>Eukaryota</taxon>
        <taxon>Metazoa</taxon>
        <taxon>Chordata</taxon>
        <taxon>Craniata</taxon>
        <taxon>Vertebrata</taxon>
        <taxon>Euteleostomi</taxon>
        <taxon>Amphibia</taxon>
        <taxon>Batrachia</taxon>
        <taxon>Anura</taxon>
        <taxon>Neobatrachia</taxon>
        <taxon>Hyloidea</taxon>
        <taxon>Hylidae</taxon>
        <taxon>Pelodryadinae</taxon>
        <taxon>Litoria</taxon>
    </lineage>
</organism>
<keyword id="KW-0027">Amidation</keyword>
<keyword id="KW-0878">Amphibian defense peptide</keyword>
<keyword id="KW-0044">Antibiotic</keyword>
<keyword id="KW-0929">Antimicrobial</keyword>
<keyword id="KW-0903">Direct protein sequencing</keyword>
<keyword id="KW-0964">Secreted</keyword>
<sequence>GWFDVVKHIASAV</sequence>
<reference key="1">
    <citation type="journal article" date="1997" name="Aust. J. Chem.">
        <title>An unusual combination of peptides from the skin glands of Ewing's tree frog, Litoria ewingi. Sequence determination and antimicrobial activity.</title>
        <authorList>
            <person name="Steinborner S.T."/>
            <person name="Bowie J.H."/>
            <person name="Tyler M.J."/>
            <person name="Wallace J.C."/>
        </authorList>
    </citation>
    <scope>PROTEIN SEQUENCE</scope>
    <scope>AMIDATION AT VAL-13</scope>
    <scope>MASS SPECTROMETRY</scope>
    <source>
        <tissue>Skin secretion</tissue>
    </source>
</reference>
<evidence type="ECO:0000269" key="1">
    <source ref="1"/>
</evidence>
<comment type="function">
    <text>Uperin 7.1 shows antibacterial activity against L.lactis and S.uberis. Uperin 7.1.1 is inactive.</text>
</comment>
<comment type="subcellular location">
    <subcellularLocation>
        <location>Secreted</location>
    </subcellularLocation>
</comment>
<comment type="tissue specificity">
    <text>Expressed by the skin dorsal glands.</text>
</comment>
<comment type="mass spectrometry">
    <molecule>Uperin-7.1</molecule>
</comment>
<comment type="mass spectrometry">
    <molecule>Uperin-7.1.1</molecule>
</comment>
<accession>P82050</accession>
<protein>
    <recommendedName>
        <fullName>Uperin-7.1</fullName>
    </recommendedName>
    <component>
        <recommendedName>
            <fullName>Uperin-7.1.1</fullName>
        </recommendedName>
    </component>
</protein>
<feature type="peptide" id="PRO_0000010302" description="Uperin-7.1">
    <location>
        <begin position="1"/>
        <end position="13"/>
    </location>
</feature>
<feature type="peptide" id="PRO_0000010303" description="Uperin-7.1.1">
    <location>
        <begin position="3"/>
        <end position="13"/>
    </location>
</feature>
<feature type="modified residue" description="Valine amide" evidence="1">
    <location>
        <position position="13"/>
    </location>
</feature>
<proteinExistence type="evidence at protein level"/>